<organism>
    <name type="scientific">Mus musculus</name>
    <name type="common">Mouse</name>
    <dbReference type="NCBI Taxonomy" id="10090"/>
    <lineage>
        <taxon>Eukaryota</taxon>
        <taxon>Metazoa</taxon>
        <taxon>Chordata</taxon>
        <taxon>Craniata</taxon>
        <taxon>Vertebrata</taxon>
        <taxon>Euteleostomi</taxon>
        <taxon>Mammalia</taxon>
        <taxon>Eutheria</taxon>
        <taxon>Euarchontoglires</taxon>
        <taxon>Glires</taxon>
        <taxon>Rodentia</taxon>
        <taxon>Myomorpha</taxon>
        <taxon>Muroidea</taxon>
        <taxon>Muridae</taxon>
        <taxon>Murinae</taxon>
        <taxon>Mus</taxon>
        <taxon>Mus</taxon>
    </lineage>
</organism>
<keyword id="KW-0007">Acetylation</keyword>
<keyword id="KW-0156">Chromatin regulator</keyword>
<keyword id="KW-0158">Chromosome</keyword>
<keyword id="KW-0378">Hydrolase</keyword>
<keyword id="KW-1017">Isopeptide bond</keyword>
<keyword id="KW-0539">Nucleus</keyword>
<keyword id="KW-0597">Phosphoprotein</keyword>
<keyword id="KW-1185">Reference proteome</keyword>
<keyword id="KW-0677">Repeat</keyword>
<keyword id="KW-0832">Ubl conjugation</keyword>
<name>SMCA5_MOUSE</name>
<dbReference type="EC" id="3.6.4.-" evidence="1"/>
<dbReference type="EMBL" id="AF375046">
    <property type="protein sequence ID" value="AAL25793.1"/>
    <property type="molecule type" value="mRNA"/>
</dbReference>
<dbReference type="EMBL" id="AF325921">
    <property type="protein sequence ID" value="AAK52454.1"/>
    <property type="molecule type" value="mRNA"/>
</dbReference>
<dbReference type="EMBL" id="BC021922">
    <property type="protein sequence ID" value="AAH21922.1"/>
    <property type="status" value="ALT_INIT"/>
    <property type="molecule type" value="mRNA"/>
</dbReference>
<dbReference type="EMBL" id="BC053069">
    <property type="protein sequence ID" value="AAH53069.1"/>
    <property type="molecule type" value="mRNA"/>
</dbReference>
<dbReference type="EMBL" id="AK039811">
    <property type="protein sequence ID" value="BAC30458.1"/>
    <property type="molecule type" value="mRNA"/>
</dbReference>
<dbReference type="EMBL" id="AK052320">
    <property type="protein sequence ID" value="BAC34934.2"/>
    <property type="molecule type" value="mRNA"/>
</dbReference>
<dbReference type="CCDS" id="CCDS22442.1"/>
<dbReference type="RefSeq" id="NP_444354.2">
    <property type="nucleotide sequence ID" value="NM_053124.2"/>
</dbReference>
<dbReference type="SMR" id="Q91ZW3"/>
<dbReference type="BioGRID" id="220300">
    <property type="interactions" value="29"/>
</dbReference>
<dbReference type="ComplexPortal" id="CPX-1133">
    <property type="entry name" value="B-WICH chromatin remodelling complex"/>
</dbReference>
<dbReference type="ComplexPortal" id="CPX-25737">
    <property type="entry name" value="CERF chromatin remodelling complex, Smarca5 variant"/>
</dbReference>
<dbReference type="ComplexPortal" id="CPX-424">
    <property type="entry name" value="NoRC chromatin remodelling complex"/>
</dbReference>
<dbReference type="ComplexPortal" id="CPX-444">
    <property type="entry name" value="ACF chromatin remodeling complex"/>
</dbReference>
<dbReference type="ComplexPortal" id="CPX-463">
    <property type="entry name" value="RSF complex"/>
</dbReference>
<dbReference type="ComplexPortal" id="CPX-841">
    <property type="entry name" value="WICH chromatin remodelling complex"/>
</dbReference>
<dbReference type="ComplexPortal" id="CPX-858">
    <property type="entry name" value="CHRAC chromatin remodeling complex"/>
</dbReference>
<dbReference type="CORUM" id="Q91ZW3"/>
<dbReference type="DIP" id="DIP-36073N"/>
<dbReference type="FunCoup" id="Q91ZW3">
    <property type="interactions" value="4040"/>
</dbReference>
<dbReference type="IntAct" id="Q91ZW3">
    <property type="interactions" value="20"/>
</dbReference>
<dbReference type="MINT" id="Q91ZW3"/>
<dbReference type="STRING" id="10090.ENSMUSP00000044361"/>
<dbReference type="GlyGen" id="Q91ZW3">
    <property type="glycosylation" value="2 sites, 1 N-linked glycan (1 site), 1 O-linked glycan (1 site)"/>
</dbReference>
<dbReference type="iPTMnet" id="Q91ZW3"/>
<dbReference type="PhosphoSitePlus" id="Q91ZW3"/>
<dbReference type="SwissPalm" id="Q91ZW3"/>
<dbReference type="jPOST" id="Q91ZW3"/>
<dbReference type="PaxDb" id="10090-ENSMUSP00000044361"/>
<dbReference type="PeptideAtlas" id="Q91ZW3"/>
<dbReference type="ProteomicsDB" id="257265"/>
<dbReference type="Pumba" id="Q91ZW3"/>
<dbReference type="Antibodypedia" id="1804">
    <property type="antibodies" value="394 antibodies from 37 providers"/>
</dbReference>
<dbReference type="DNASU" id="93762"/>
<dbReference type="Ensembl" id="ENSMUST00000043359.9">
    <property type="protein sequence ID" value="ENSMUSP00000044361.9"/>
    <property type="gene ID" value="ENSMUSG00000031715.15"/>
</dbReference>
<dbReference type="GeneID" id="93762"/>
<dbReference type="KEGG" id="mmu:93762"/>
<dbReference type="UCSC" id="uc009mja.2">
    <property type="organism name" value="mouse"/>
</dbReference>
<dbReference type="AGR" id="MGI:1935129"/>
<dbReference type="CTD" id="8467"/>
<dbReference type="MGI" id="MGI:1935129">
    <property type="gene designation" value="Smarca5"/>
</dbReference>
<dbReference type="VEuPathDB" id="HostDB:ENSMUSG00000031715"/>
<dbReference type="eggNOG" id="KOG0385">
    <property type="taxonomic scope" value="Eukaryota"/>
</dbReference>
<dbReference type="GeneTree" id="ENSGT00940000156733"/>
<dbReference type="HOGENOM" id="CLU_000315_0_3_1"/>
<dbReference type="InParanoid" id="Q91ZW3"/>
<dbReference type="OMA" id="EFQFRES"/>
<dbReference type="OrthoDB" id="5857104at2759"/>
<dbReference type="PhylomeDB" id="Q91ZW3"/>
<dbReference type="TreeFam" id="TF300674"/>
<dbReference type="Reactome" id="R-MMU-5250924">
    <property type="pathway name" value="B-WICH complex positively regulates rRNA expression"/>
</dbReference>
<dbReference type="Reactome" id="R-MMU-5693565">
    <property type="pathway name" value="Recruitment and ATM-mediated phosphorylation of repair and signaling proteins at DNA double strand breaks"/>
</dbReference>
<dbReference type="Reactome" id="R-MMU-606279">
    <property type="pathway name" value="Deposition of new CENPA-containing nucleosomes at the centromere"/>
</dbReference>
<dbReference type="BioGRID-ORCS" id="93762">
    <property type="hits" value="37 hits in 119 CRISPR screens"/>
</dbReference>
<dbReference type="ChiTaRS" id="Smarca5">
    <property type="organism name" value="mouse"/>
</dbReference>
<dbReference type="PRO" id="PR:Q91ZW3"/>
<dbReference type="Proteomes" id="UP000000589">
    <property type="component" value="Chromosome 8"/>
</dbReference>
<dbReference type="RNAct" id="Q91ZW3">
    <property type="molecule type" value="protein"/>
</dbReference>
<dbReference type="Bgee" id="ENSMUSG00000031715">
    <property type="expression patterns" value="Expressed in embryonic post-anal tail and 297 other cell types or tissues"/>
</dbReference>
<dbReference type="GO" id="GO:0016590">
    <property type="term" value="C:ACF complex"/>
    <property type="evidence" value="ECO:0000266"/>
    <property type="project" value="ComplexPortal"/>
</dbReference>
<dbReference type="GO" id="GO:0110016">
    <property type="term" value="C:B-WICH complex"/>
    <property type="evidence" value="ECO:0000266"/>
    <property type="project" value="ComplexPortal"/>
</dbReference>
<dbReference type="GO" id="GO:0090537">
    <property type="term" value="C:CERF complex"/>
    <property type="evidence" value="ECO:0000314"/>
    <property type="project" value="UniProtKB"/>
</dbReference>
<dbReference type="GO" id="GO:0008623">
    <property type="term" value="C:CHRAC"/>
    <property type="evidence" value="ECO:0000303"/>
    <property type="project" value="ComplexPortal"/>
</dbReference>
<dbReference type="GO" id="GO:0005677">
    <property type="term" value="C:chromatin silencing complex"/>
    <property type="evidence" value="ECO:0000314"/>
    <property type="project" value="UniProtKB"/>
</dbReference>
<dbReference type="GO" id="GO:0000793">
    <property type="term" value="C:condensed chromosome"/>
    <property type="evidence" value="ECO:0007669"/>
    <property type="project" value="Ensembl"/>
</dbReference>
<dbReference type="GO" id="GO:0001650">
    <property type="term" value="C:fibrillar center"/>
    <property type="evidence" value="ECO:0007669"/>
    <property type="project" value="Ensembl"/>
</dbReference>
<dbReference type="GO" id="GO:0031010">
    <property type="term" value="C:ISWI-type complex"/>
    <property type="evidence" value="ECO:0000353"/>
    <property type="project" value="MGI"/>
</dbReference>
<dbReference type="GO" id="GO:0090536">
    <property type="term" value="C:NoRC complex"/>
    <property type="evidence" value="ECO:0000353"/>
    <property type="project" value="ComplexPortal"/>
</dbReference>
<dbReference type="GO" id="GO:0043596">
    <property type="term" value="C:nuclear replication fork"/>
    <property type="evidence" value="ECO:0007669"/>
    <property type="project" value="Ensembl"/>
</dbReference>
<dbReference type="GO" id="GO:0005730">
    <property type="term" value="C:nucleolus"/>
    <property type="evidence" value="ECO:0000303"/>
    <property type="project" value="ComplexPortal"/>
</dbReference>
<dbReference type="GO" id="GO:0005654">
    <property type="term" value="C:nucleoplasm"/>
    <property type="evidence" value="ECO:0000304"/>
    <property type="project" value="Reactome"/>
</dbReference>
<dbReference type="GO" id="GO:0005634">
    <property type="term" value="C:nucleus"/>
    <property type="evidence" value="ECO:0000314"/>
    <property type="project" value="ComplexPortal"/>
</dbReference>
<dbReference type="GO" id="GO:0016589">
    <property type="term" value="C:NURF complex"/>
    <property type="evidence" value="ECO:0007669"/>
    <property type="project" value="Ensembl"/>
</dbReference>
<dbReference type="GO" id="GO:0005721">
    <property type="term" value="C:pericentric heterochromatin"/>
    <property type="evidence" value="ECO:0000314"/>
    <property type="project" value="ComplexPortal"/>
</dbReference>
<dbReference type="GO" id="GO:0031213">
    <property type="term" value="C:RSF complex"/>
    <property type="evidence" value="ECO:0000266"/>
    <property type="project" value="ComplexPortal"/>
</dbReference>
<dbReference type="GO" id="GO:0035861">
    <property type="term" value="C:site of double-strand break"/>
    <property type="evidence" value="ECO:0000250"/>
    <property type="project" value="UniProtKB"/>
</dbReference>
<dbReference type="GO" id="GO:0090535">
    <property type="term" value="C:WICH complex"/>
    <property type="evidence" value="ECO:0000266"/>
    <property type="project" value="ComplexPortal"/>
</dbReference>
<dbReference type="GO" id="GO:0005524">
    <property type="term" value="F:ATP binding"/>
    <property type="evidence" value="ECO:0007669"/>
    <property type="project" value="UniProtKB-KW"/>
</dbReference>
<dbReference type="GO" id="GO:0016887">
    <property type="term" value="F:ATP hydrolysis activity"/>
    <property type="evidence" value="ECO:0007669"/>
    <property type="project" value="Ensembl"/>
</dbReference>
<dbReference type="GO" id="GO:0140658">
    <property type="term" value="F:ATP-dependent chromatin remodeler activity"/>
    <property type="evidence" value="ECO:0000250"/>
    <property type="project" value="UniProtKB"/>
</dbReference>
<dbReference type="GO" id="GO:0003677">
    <property type="term" value="F:DNA binding"/>
    <property type="evidence" value="ECO:0007669"/>
    <property type="project" value="Ensembl"/>
</dbReference>
<dbReference type="GO" id="GO:0004386">
    <property type="term" value="F:helicase activity"/>
    <property type="evidence" value="ECO:0007669"/>
    <property type="project" value="UniProtKB-KW"/>
</dbReference>
<dbReference type="GO" id="GO:0042393">
    <property type="term" value="F:histone binding"/>
    <property type="evidence" value="ECO:0007669"/>
    <property type="project" value="Ensembl"/>
</dbReference>
<dbReference type="GO" id="GO:0140751">
    <property type="term" value="F:histone octamer slider activity"/>
    <property type="evidence" value="ECO:0007669"/>
    <property type="project" value="Ensembl"/>
</dbReference>
<dbReference type="GO" id="GO:0031491">
    <property type="term" value="F:nucleosome binding"/>
    <property type="evidence" value="ECO:0007669"/>
    <property type="project" value="InterPro"/>
</dbReference>
<dbReference type="GO" id="GO:0140374">
    <property type="term" value="P:antiviral innate immune response"/>
    <property type="evidence" value="ECO:0007669"/>
    <property type="project" value="Ensembl"/>
</dbReference>
<dbReference type="GO" id="GO:1990830">
    <property type="term" value="P:cellular response to leukemia inhibitory factor"/>
    <property type="evidence" value="ECO:0000270"/>
    <property type="project" value="MGI"/>
</dbReference>
<dbReference type="GO" id="GO:0006325">
    <property type="term" value="P:chromatin organization"/>
    <property type="evidence" value="ECO:0000314"/>
    <property type="project" value="MGI"/>
</dbReference>
<dbReference type="GO" id="GO:0006338">
    <property type="term" value="P:chromatin remodeling"/>
    <property type="evidence" value="ECO:0000314"/>
    <property type="project" value="ComplexPortal"/>
</dbReference>
<dbReference type="GO" id="GO:0006974">
    <property type="term" value="P:DNA damage response"/>
    <property type="evidence" value="ECO:0000303"/>
    <property type="project" value="ComplexPortal"/>
</dbReference>
<dbReference type="GO" id="GO:0006346">
    <property type="term" value="P:DNA methylation-dependent constitutive heterochromatin formation"/>
    <property type="evidence" value="ECO:0000314"/>
    <property type="project" value="ComplexPortal"/>
</dbReference>
<dbReference type="GO" id="GO:0006281">
    <property type="term" value="P:DNA repair"/>
    <property type="evidence" value="ECO:0000250"/>
    <property type="project" value="UniProtKB"/>
</dbReference>
<dbReference type="GO" id="GO:0006352">
    <property type="term" value="P:DNA-templated transcription initiation"/>
    <property type="evidence" value="ECO:0007669"/>
    <property type="project" value="Ensembl"/>
</dbReference>
<dbReference type="GO" id="GO:0031507">
    <property type="term" value="P:heterochromatin formation"/>
    <property type="evidence" value="ECO:0000314"/>
    <property type="project" value="ComplexPortal"/>
</dbReference>
<dbReference type="GO" id="GO:1905213">
    <property type="term" value="P:negative regulation of mitotic chromosome condensation"/>
    <property type="evidence" value="ECO:0000266"/>
    <property type="project" value="ComplexPortal"/>
</dbReference>
<dbReference type="GO" id="GO:0016479">
    <property type="term" value="P:negative regulation of transcription by RNA polymerase I"/>
    <property type="evidence" value="ECO:0000314"/>
    <property type="project" value="ComplexPortal"/>
</dbReference>
<dbReference type="GO" id="GO:0006334">
    <property type="term" value="P:nucleosome assembly"/>
    <property type="evidence" value="ECO:0000266"/>
    <property type="project" value="ComplexPortal"/>
</dbReference>
<dbReference type="GO" id="GO:0045740">
    <property type="term" value="P:positive regulation of DNA replication"/>
    <property type="evidence" value="ECO:0000315"/>
    <property type="project" value="ComplexPortal"/>
</dbReference>
<dbReference type="GO" id="GO:0045893">
    <property type="term" value="P:positive regulation of DNA-templated transcription"/>
    <property type="evidence" value="ECO:0000315"/>
    <property type="project" value="MGI"/>
</dbReference>
<dbReference type="GO" id="GO:0045943">
    <property type="term" value="P:positive regulation of transcription by RNA polymerase I"/>
    <property type="evidence" value="ECO:0000303"/>
    <property type="project" value="ComplexPortal"/>
</dbReference>
<dbReference type="GO" id="GO:0045944">
    <property type="term" value="P:positive regulation of transcription by RNA polymerase II"/>
    <property type="evidence" value="ECO:0000303"/>
    <property type="project" value="ComplexPortal"/>
</dbReference>
<dbReference type="GO" id="GO:0045945">
    <property type="term" value="P:positive regulation of transcription by RNA polymerase III"/>
    <property type="evidence" value="ECO:0000266"/>
    <property type="project" value="ComplexPortal"/>
</dbReference>
<dbReference type="GO" id="GO:0000183">
    <property type="term" value="P:rDNA heterochromatin formation"/>
    <property type="evidence" value="ECO:0000314"/>
    <property type="project" value="UniProtKB"/>
</dbReference>
<dbReference type="GO" id="GO:0006275">
    <property type="term" value="P:regulation of DNA replication"/>
    <property type="evidence" value="ECO:0000266"/>
    <property type="project" value="ComplexPortal"/>
</dbReference>
<dbReference type="GO" id="GO:0006355">
    <property type="term" value="P:regulation of DNA-templated transcription"/>
    <property type="evidence" value="ECO:0000266"/>
    <property type="project" value="ComplexPortal"/>
</dbReference>
<dbReference type="CDD" id="cd18064">
    <property type="entry name" value="DEXHc_SMARCA5"/>
    <property type="match status" value="1"/>
</dbReference>
<dbReference type="CDD" id="cd00167">
    <property type="entry name" value="SANT"/>
    <property type="match status" value="1"/>
</dbReference>
<dbReference type="CDD" id="cd18793">
    <property type="entry name" value="SF2_C_SNF"/>
    <property type="match status" value="1"/>
</dbReference>
<dbReference type="FunFam" id="3.40.50.300:FF:000082">
    <property type="entry name" value="ISWI chromatin remodeling complex ATPase ISW1"/>
    <property type="match status" value="1"/>
</dbReference>
<dbReference type="FunFam" id="1.10.10.60:FF:000022">
    <property type="entry name" value="ISWI chromatin-remodeling complex ATPase CHR11 isoform A"/>
    <property type="match status" value="1"/>
</dbReference>
<dbReference type="FunFam" id="1.10.10.60:FF:000049">
    <property type="entry name" value="SWI/SNF-related matrix-associated actin-dependent regulator of chromatin subfamily A member"/>
    <property type="match status" value="1"/>
</dbReference>
<dbReference type="FunFam" id="1.10.1040.30:FF:000001">
    <property type="entry name" value="SWI/SNF-related matrix-associated actin-dependent regulator of chromatin subfamily A member"/>
    <property type="match status" value="1"/>
</dbReference>
<dbReference type="FunFam" id="1.20.5.1190:FF:000002">
    <property type="entry name" value="SWI/SNF-related matrix-associated actin-dependent regulator of chromatin subfamily A member"/>
    <property type="match status" value="1"/>
</dbReference>
<dbReference type="FunFam" id="3.40.50.10810:FF:000101">
    <property type="entry name" value="SWI/SNF-related, matrix-associated, actin-dependent regulator of"/>
    <property type="match status" value="1"/>
</dbReference>
<dbReference type="Gene3D" id="1.10.10.60">
    <property type="entry name" value="Homeodomain-like"/>
    <property type="match status" value="2"/>
</dbReference>
<dbReference type="Gene3D" id="1.20.5.1190">
    <property type="entry name" value="iswi atpase"/>
    <property type="match status" value="1"/>
</dbReference>
<dbReference type="Gene3D" id="1.10.1040.30">
    <property type="entry name" value="ISWI, HAND domain"/>
    <property type="match status" value="1"/>
</dbReference>
<dbReference type="Gene3D" id="3.40.50.300">
    <property type="entry name" value="P-loop containing nucleotide triphosphate hydrolases"/>
    <property type="match status" value="1"/>
</dbReference>
<dbReference type="Gene3D" id="3.40.50.10810">
    <property type="entry name" value="Tandem AAA-ATPase domain"/>
    <property type="match status" value="1"/>
</dbReference>
<dbReference type="InterPro" id="IPR014001">
    <property type="entry name" value="Helicase_ATP-bd"/>
</dbReference>
<dbReference type="InterPro" id="IPR001650">
    <property type="entry name" value="Helicase_C-like"/>
</dbReference>
<dbReference type="InterPro" id="IPR009057">
    <property type="entry name" value="Homeodomain-like_sf"/>
</dbReference>
<dbReference type="InterPro" id="IPR015194">
    <property type="entry name" value="ISWI_HAND-dom"/>
</dbReference>
<dbReference type="InterPro" id="IPR036306">
    <property type="entry name" value="ISWI_HAND-dom_sf"/>
</dbReference>
<dbReference type="InterPro" id="IPR027417">
    <property type="entry name" value="P-loop_NTPase"/>
</dbReference>
<dbReference type="InterPro" id="IPR001005">
    <property type="entry name" value="SANT/Myb"/>
</dbReference>
<dbReference type="InterPro" id="IPR017884">
    <property type="entry name" value="SANT_dom"/>
</dbReference>
<dbReference type="InterPro" id="IPR015195">
    <property type="entry name" value="SLIDE"/>
</dbReference>
<dbReference type="InterPro" id="IPR038718">
    <property type="entry name" value="SNF2-like_sf"/>
</dbReference>
<dbReference type="InterPro" id="IPR049730">
    <property type="entry name" value="SNF2/RAD54-like_C"/>
</dbReference>
<dbReference type="InterPro" id="IPR000330">
    <property type="entry name" value="SNF2_N"/>
</dbReference>
<dbReference type="PANTHER" id="PTHR45623">
    <property type="entry name" value="CHROMODOMAIN-HELICASE-DNA-BINDING PROTEIN 3-RELATED-RELATED"/>
    <property type="match status" value="1"/>
</dbReference>
<dbReference type="PANTHER" id="PTHR45623:SF54">
    <property type="entry name" value="SWI_SNF RELATED, MATRIX ASSOCIATED, ACTIN DEPENDENT REGULATOR OF CHROMATIN, SUBFAMILY A, MEMBER 5"/>
    <property type="match status" value="1"/>
</dbReference>
<dbReference type="Pfam" id="PF09110">
    <property type="entry name" value="HAND"/>
    <property type="match status" value="1"/>
</dbReference>
<dbReference type="Pfam" id="PF00271">
    <property type="entry name" value="Helicase_C"/>
    <property type="match status" value="1"/>
</dbReference>
<dbReference type="Pfam" id="PF09111">
    <property type="entry name" value="SLIDE"/>
    <property type="match status" value="1"/>
</dbReference>
<dbReference type="Pfam" id="PF00176">
    <property type="entry name" value="SNF2-rel_dom"/>
    <property type="match status" value="1"/>
</dbReference>
<dbReference type="SMART" id="SM00487">
    <property type="entry name" value="DEXDc"/>
    <property type="match status" value="1"/>
</dbReference>
<dbReference type="SMART" id="SM00490">
    <property type="entry name" value="HELICc"/>
    <property type="match status" value="1"/>
</dbReference>
<dbReference type="SMART" id="SM00717">
    <property type="entry name" value="SANT"/>
    <property type="match status" value="2"/>
</dbReference>
<dbReference type="SUPFAM" id="SSF101224">
    <property type="entry name" value="HAND domain of the nucleosome remodeling ATPase ISWI"/>
    <property type="match status" value="1"/>
</dbReference>
<dbReference type="SUPFAM" id="SSF46689">
    <property type="entry name" value="Homeodomain-like"/>
    <property type="match status" value="2"/>
</dbReference>
<dbReference type="SUPFAM" id="SSF52540">
    <property type="entry name" value="P-loop containing nucleoside triphosphate hydrolases"/>
    <property type="match status" value="2"/>
</dbReference>
<dbReference type="PROSITE" id="PS51192">
    <property type="entry name" value="HELICASE_ATP_BIND_1"/>
    <property type="match status" value="1"/>
</dbReference>
<dbReference type="PROSITE" id="PS51194">
    <property type="entry name" value="HELICASE_CTER"/>
    <property type="match status" value="1"/>
</dbReference>
<dbReference type="PROSITE" id="PS51293">
    <property type="entry name" value="SANT"/>
    <property type="match status" value="1"/>
</dbReference>
<proteinExistence type="evidence at protein level"/>
<evidence type="ECO:0000250" key="1">
    <source>
        <dbReference type="UniProtKB" id="O60264"/>
    </source>
</evidence>
<evidence type="ECO:0000255" key="2">
    <source>
        <dbReference type="PROSITE-ProRule" id="PRU00541"/>
    </source>
</evidence>
<evidence type="ECO:0000255" key="3">
    <source>
        <dbReference type="PROSITE-ProRule" id="PRU00542"/>
    </source>
</evidence>
<evidence type="ECO:0000255" key="4">
    <source>
        <dbReference type="PROSITE-ProRule" id="PRU00624"/>
    </source>
</evidence>
<evidence type="ECO:0000256" key="5">
    <source>
        <dbReference type="SAM" id="MobiDB-lite"/>
    </source>
</evidence>
<evidence type="ECO:0000269" key="6">
    <source>
    </source>
</evidence>
<evidence type="ECO:0000269" key="7">
    <source>
    </source>
</evidence>
<evidence type="ECO:0000269" key="8">
    <source>
    </source>
</evidence>
<evidence type="ECO:0000269" key="9">
    <source>
    </source>
</evidence>
<evidence type="ECO:0000269" key="10">
    <source>
    </source>
</evidence>
<evidence type="ECO:0000269" key="11">
    <source>
    </source>
</evidence>
<evidence type="ECO:0000269" key="12">
    <source>
    </source>
</evidence>
<evidence type="ECO:0000269" key="13">
    <source>
    </source>
</evidence>
<evidence type="ECO:0000269" key="14">
    <source>
    </source>
</evidence>
<evidence type="ECO:0000303" key="15">
    <source>
    </source>
</evidence>
<evidence type="ECO:0000303" key="16">
    <source>
    </source>
</evidence>
<evidence type="ECO:0000305" key="17"/>
<evidence type="ECO:0007744" key="18">
    <source>
    </source>
</evidence>
<evidence type="ECO:0007744" key="19">
    <source>
    </source>
</evidence>
<evidence type="ECO:0007744" key="20">
    <source>
    </source>
</evidence>
<sequence>MSSAVEPPPPPPPESAPSKPSAAGAGGSSSGNKGGPEGGAAPAAPCAAGSGPADTEMEEVFDHGSPGKQKEIQEPDPTYEEKMQTDRANRFEYLLKQTELFAHFIQPAAQKTPTSPLKMKPGRPRVKKDEKQNLLSVGDYRHRRTEQEEDEELLTESSKATNVCTRFEDSPSYVKWGKLRDYQVRGLNWLISLYENGINGILADEMGLGKTLQTISLLGYMKHYRNIPGPHMVLVPKSTLHNWMSEFKKWVPTLRSVCLIGDKEQRAAFVRDVLLPGEWDVCVTSYEMLIKEKSVFKKFNWRYLVIDEAHRIKNEKSKLSEIVREFKTTNRLLLTGTPLQNNLHELWSLLNFLLPDVFNSADDFDSWFDTNNCLGDQKLVERLHMVLRPFLLRRIKADVEKSLPPKKEVKIYVGLSKMQREWYTRILMKDIDILNSAGKMDKMRLLNILMQLRKCCNHPYLFDGAEPGPPYTTDMHLVTNSGKMVVLDKLLPKLKEQGSRVLIFSQMTRVLDILEDYCMWRNYEYCRLDGQTPHDERQDSINAYNEPNSTKFVFMLSTRAGGLGINLATADVVILYDSDWNPQVDLQAMDRAHRIGQTKTVRVFRFITDNTVEERIVERAEMKLRLDSIVIQQGRLVDQNLNKIGKDEMLQMIRHGATHVFASKESEITDEDIDGILERGAKKTAEMNEKLSKMGESSLRNFTMDTESSVYNFEGEDYREKQKIAFTEWIEPPKRERKANYAVDAYFREALRVSEPKAPKAPRPPKQPNVQDFQFFPPRLFELLEKEILYYRKTIGYKVPRSPDLPNAAQAQKEEQLKIDEAEPLNDEELEEKEKLLTQGFTNWNKRDFNQFIKANEKWGRDDIENIAREVEGKTPEEVIEYSAVFWERCNELQDIEKIMAQIERGEARIQRRISIKKALDTKIGRYKAPFHQLRISYGTNKGKNYTEEEDRFLICMLHKLGFDKENVYDELRQCIRNSPQFRFDWFLKSRTAMELQRRCNTLITLIERENMELEEKEKAEKKKRGPKPSTQKRKMDGAPDGRGRKKKLKL</sequence>
<reference key="1">
    <citation type="journal article" date="2000" name="Leukemia">
        <title>Chromatin remodeling gene SMARCA5 is dysregulated in primitive hematopoietic cells of acute leukemia.</title>
        <authorList>
            <person name="Stopka T."/>
            <person name="Zakova D."/>
            <person name="Fuchs O."/>
            <person name="Kubrova O."/>
            <person name="Blafkova J."/>
            <person name="Jelinek J."/>
            <person name="Necas E."/>
            <person name="Zivny J."/>
        </authorList>
    </citation>
    <scope>NUCLEOTIDE SEQUENCE [MRNA]</scope>
    <scope>DEVELOPMENTAL STAGE</scope>
    <source>
        <tissue>Erythroleukemia</tissue>
    </source>
</reference>
<reference key="2">
    <citation type="journal article" date="2001" name="J. Neurochem.">
        <title>Cloning and characterization of the murine Imitation Switch (ISWI) genes: differential expression patterns suggest distinct developmental roles for Snf2h and Snf2l.</title>
        <authorList>
            <person name="Lazzaro M.A."/>
            <person name="Picketts D.J."/>
        </authorList>
    </citation>
    <scope>NUCLEOTIDE SEQUENCE [MRNA]</scope>
</reference>
<reference key="3">
    <citation type="journal article" date="2004" name="Genome Res.">
        <title>The status, quality, and expansion of the NIH full-length cDNA project: the Mammalian Gene Collection (MGC).</title>
        <authorList>
            <consortium name="The MGC Project Team"/>
        </authorList>
    </citation>
    <scope>NUCLEOTIDE SEQUENCE [LARGE SCALE MRNA]</scope>
    <source>
        <strain>C57BL/6J</strain>
        <strain>FVB/N</strain>
        <tissue>Brain</tissue>
        <tissue>Mammary gland</tissue>
    </source>
</reference>
<reference key="4">
    <citation type="journal article" date="2005" name="Science">
        <title>The transcriptional landscape of the mammalian genome.</title>
        <authorList>
            <person name="Carninci P."/>
            <person name="Kasukawa T."/>
            <person name="Katayama S."/>
            <person name="Gough J."/>
            <person name="Frith M.C."/>
            <person name="Maeda N."/>
            <person name="Oyama R."/>
            <person name="Ravasi T."/>
            <person name="Lenhard B."/>
            <person name="Wells C."/>
            <person name="Kodzius R."/>
            <person name="Shimokawa K."/>
            <person name="Bajic V.B."/>
            <person name="Brenner S.E."/>
            <person name="Batalov S."/>
            <person name="Forrest A.R."/>
            <person name="Zavolan M."/>
            <person name="Davis M.J."/>
            <person name="Wilming L.G."/>
            <person name="Aidinis V."/>
            <person name="Allen J.E."/>
            <person name="Ambesi-Impiombato A."/>
            <person name="Apweiler R."/>
            <person name="Aturaliya R.N."/>
            <person name="Bailey T.L."/>
            <person name="Bansal M."/>
            <person name="Baxter L."/>
            <person name="Beisel K.W."/>
            <person name="Bersano T."/>
            <person name="Bono H."/>
            <person name="Chalk A.M."/>
            <person name="Chiu K.P."/>
            <person name="Choudhary V."/>
            <person name="Christoffels A."/>
            <person name="Clutterbuck D.R."/>
            <person name="Crowe M.L."/>
            <person name="Dalla E."/>
            <person name="Dalrymple B.P."/>
            <person name="de Bono B."/>
            <person name="Della Gatta G."/>
            <person name="di Bernardo D."/>
            <person name="Down T."/>
            <person name="Engstrom P."/>
            <person name="Fagiolini M."/>
            <person name="Faulkner G."/>
            <person name="Fletcher C.F."/>
            <person name="Fukushima T."/>
            <person name="Furuno M."/>
            <person name="Futaki S."/>
            <person name="Gariboldi M."/>
            <person name="Georgii-Hemming P."/>
            <person name="Gingeras T.R."/>
            <person name="Gojobori T."/>
            <person name="Green R.E."/>
            <person name="Gustincich S."/>
            <person name="Harbers M."/>
            <person name="Hayashi Y."/>
            <person name="Hensch T.K."/>
            <person name="Hirokawa N."/>
            <person name="Hill D."/>
            <person name="Huminiecki L."/>
            <person name="Iacono M."/>
            <person name="Ikeo K."/>
            <person name="Iwama A."/>
            <person name="Ishikawa T."/>
            <person name="Jakt M."/>
            <person name="Kanapin A."/>
            <person name="Katoh M."/>
            <person name="Kawasawa Y."/>
            <person name="Kelso J."/>
            <person name="Kitamura H."/>
            <person name="Kitano H."/>
            <person name="Kollias G."/>
            <person name="Krishnan S.P."/>
            <person name="Kruger A."/>
            <person name="Kummerfeld S.K."/>
            <person name="Kurochkin I.V."/>
            <person name="Lareau L.F."/>
            <person name="Lazarevic D."/>
            <person name="Lipovich L."/>
            <person name="Liu J."/>
            <person name="Liuni S."/>
            <person name="McWilliam S."/>
            <person name="Madan Babu M."/>
            <person name="Madera M."/>
            <person name="Marchionni L."/>
            <person name="Matsuda H."/>
            <person name="Matsuzawa S."/>
            <person name="Miki H."/>
            <person name="Mignone F."/>
            <person name="Miyake S."/>
            <person name="Morris K."/>
            <person name="Mottagui-Tabar S."/>
            <person name="Mulder N."/>
            <person name="Nakano N."/>
            <person name="Nakauchi H."/>
            <person name="Ng P."/>
            <person name="Nilsson R."/>
            <person name="Nishiguchi S."/>
            <person name="Nishikawa S."/>
            <person name="Nori F."/>
            <person name="Ohara O."/>
            <person name="Okazaki Y."/>
            <person name="Orlando V."/>
            <person name="Pang K.C."/>
            <person name="Pavan W.J."/>
            <person name="Pavesi G."/>
            <person name="Pesole G."/>
            <person name="Petrovsky N."/>
            <person name="Piazza S."/>
            <person name="Reed J."/>
            <person name="Reid J.F."/>
            <person name="Ring B.Z."/>
            <person name="Ringwald M."/>
            <person name="Rost B."/>
            <person name="Ruan Y."/>
            <person name="Salzberg S.L."/>
            <person name="Sandelin A."/>
            <person name="Schneider C."/>
            <person name="Schoenbach C."/>
            <person name="Sekiguchi K."/>
            <person name="Semple C.A."/>
            <person name="Seno S."/>
            <person name="Sessa L."/>
            <person name="Sheng Y."/>
            <person name="Shibata Y."/>
            <person name="Shimada H."/>
            <person name="Shimada K."/>
            <person name="Silva D."/>
            <person name="Sinclair B."/>
            <person name="Sperling S."/>
            <person name="Stupka E."/>
            <person name="Sugiura K."/>
            <person name="Sultana R."/>
            <person name="Takenaka Y."/>
            <person name="Taki K."/>
            <person name="Tammoja K."/>
            <person name="Tan S.L."/>
            <person name="Tang S."/>
            <person name="Taylor M.S."/>
            <person name="Tegner J."/>
            <person name="Teichmann S.A."/>
            <person name="Ueda H.R."/>
            <person name="van Nimwegen E."/>
            <person name="Verardo R."/>
            <person name="Wei C.L."/>
            <person name="Yagi K."/>
            <person name="Yamanishi H."/>
            <person name="Zabarovsky E."/>
            <person name="Zhu S."/>
            <person name="Zimmer A."/>
            <person name="Hide W."/>
            <person name="Bult C."/>
            <person name="Grimmond S.M."/>
            <person name="Teasdale R.D."/>
            <person name="Liu E.T."/>
            <person name="Brusic V."/>
            <person name="Quackenbush J."/>
            <person name="Wahlestedt C."/>
            <person name="Mattick J.S."/>
            <person name="Hume D.A."/>
            <person name="Kai C."/>
            <person name="Sasaki D."/>
            <person name="Tomaru Y."/>
            <person name="Fukuda S."/>
            <person name="Kanamori-Katayama M."/>
            <person name="Suzuki M."/>
            <person name="Aoki J."/>
            <person name="Arakawa T."/>
            <person name="Iida J."/>
            <person name="Imamura K."/>
            <person name="Itoh M."/>
            <person name="Kato T."/>
            <person name="Kawaji H."/>
            <person name="Kawagashira N."/>
            <person name="Kawashima T."/>
            <person name="Kojima M."/>
            <person name="Kondo S."/>
            <person name="Konno H."/>
            <person name="Nakano K."/>
            <person name="Ninomiya N."/>
            <person name="Nishio T."/>
            <person name="Okada M."/>
            <person name="Plessy C."/>
            <person name="Shibata K."/>
            <person name="Shiraki T."/>
            <person name="Suzuki S."/>
            <person name="Tagami M."/>
            <person name="Waki K."/>
            <person name="Watahiki A."/>
            <person name="Okamura-Oho Y."/>
            <person name="Suzuki H."/>
            <person name="Kawai J."/>
            <person name="Hayashizaki Y."/>
        </authorList>
    </citation>
    <scope>NUCLEOTIDE SEQUENCE [LARGE SCALE MRNA] OF 440-1007</scope>
    <source>
        <strain>C57BL/6J</strain>
        <tissue>Heart</tissue>
        <tissue>Thymus</tissue>
    </source>
</reference>
<reference key="5">
    <citation type="journal article" date="2001" name="EMBO J.">
        <title>NoRC -- a novel member of mammalian ISWI-containing chromatin remodeling machines.</title>
        <authorList>
            <person name="Strohner R."/>
            <person name="Nemeth A."/>
            <person name="Jansa P."/>
            <person name="Hofmann-Rohrer U."/>
            <person name="Santoro R."/>
            <person name="Laengst G."/>
            <person name="Grummt I."/>
        </authorList>
    </citation>
    <scope>FUNCTION</scope>
    <scope>SUBCELLULAR LOCATION</scope>
    <scope>IDENTIFICATION IN THE NORC-5 ISWI CHROMATIN-REMODELING COMPLEX</scope>
    <scope>INTERACTION WITH BAZ2A</scope>
</reference>
<reference key="6">
    <citation type="journal article" date="2002" name="EMBO J.">
        <title>WSTF-ISWI chromatin remodeling complex targets heterochromatic replication foci.</title>
        <authorList>
            <person name="Bozhenok L."/>
            <person name="Wade P.A."/>
            <person name="Varga-Weisz P."/>
        </authorList>
    </citation>
    <scope>FUNCTION</scope>
    <scope>IDENTIFICATION IN THE WICH-5 ISWI CHROMATIN-REMODELING COMPLEX</scope>
    <scope>INTERACTION WITH BAZ1B</scope>
</reference>
<reference key="7">
    <citation type="journal article" date="2002" name="EMBO J.">
        <title>The chromatin remodeling complex NoRC targets HDAC1 to the ribosomal gene promoter and represses RNA polymerase I transcription.</title>
        <authorList>
            <person name="Zhou Y."/>
            <person name="Santoro R."/>
            <person name="Grummt I."/>
        </authorList>
    </citation>
    <scope>FUNCTION</scope>
    <scope>IDENTIFICATION IN THE NORC COMPLEX</scope>
    <scope>INTERACTION WITH BAZ2A AND HDAC1</scope>
</reference>
<reference key="8">
    <citation type="journal article" date="2002" name="Nat. Genet.">
        <title>The nucleolar remodeling complex NoRC mediates heterochromatin formation and silencing of ribosomal gene transcription.</title>
        <authorList>
            <person name="Santoro R."/>
            <person name="Li J."/>
            <person name="Grummt I."/>
        </authorList>
    </citation>
    <scope>FUNCTION</scope>
</reference>
<reference key="9">
    <citation type="journal article" date="2003" name="Proc. Natl. Acad. Sci. U.S.A.">
        <title>The ISWI ATPase Snf2h is required for early mouse development.</title>
        <authorList>
            <person name="Stopka T."/>
            <person name="Skoultchi A.I."/>
        </authorList>
    </citation>
    <scope>FUNCTION</scope>
</reference>
<reference key="10">
    <citation type="journal article" date="2004" name="Biochem. Cell Biol.">
        <title>Functional diversity of ISWI complexes.</title>
        <authorList>
            <person name="Dirscherl S.S."/>
            <person name="Krebs J.E."/>
        </authorList>
    </citation>
    <scope>REVIEW</scope>
    <scope>CHARACTERIZATION OF ISWI COMPLEXES</scope>
</reference>
<reference key="11">
    <citation type="journal article" date="2006" name="EMBO Rep.">
        <title>The chromatin remodelling complex WSTF-SNF2h interacts with nuclear myosin 1 and has a role in RNA polymerase I transcription.</title>
        <authorList>
            <person name="Percipalle P."/>
            <person name="Fomproix N."/>
            <person name="Cavellan E."/>
            <person name="Voit R."/>
            <person name="Reimer G."/>
            <person name="Krueger T."/>
            <person name="Thyberg J."/>
            <person name="Scheer U."/>
            <person name="Grummt I."/>
            <person name="Oestlund Farrants A.-K.O."/>
        </authorList>
    </citation>
    <scope>INTERACTION WITH MYO1C</scope>
</reference>
<reference key="12">
    <citation type="journal article" date="2007" name="Proc. Natl. Acad. Sci. U.S.A.">
        <title>Large-scale phosphorylation analysis of mouse liver.</title>
        <authorList>
            <person name="Villen J."/>
            <person name="Beausoleil S.A."/>
            <person name="Gerber S.A."/>
            <person name="Gygi S.P."/>
        </authorList>
    </citation>
    <scope>IDENTIFICATION BY MASS SPECTROMETRY [LARGE SCALE ANALYSIS]</scope>
    <source>
        <tissue>Liver</tissue>
    </source>
</reference>
<reference key="13">
    <citation type="journal article" date="2009" name="Immunity">
        <title>The phagosomal proteome in interferon-gamma-activated macrophages.</title>
        <authorList>
            <person name="Trost M."/>
            <person name="English L."/>
            <person name="Lemieux S."/>
            <person name="Courcelles M."/>
            <person name="Desjardins M."/>
            <person name="Thibault P."/>
        </authorList>
    </citation>
    <scope>PHOSPHORYLATION [LARGE SCALE ANALYSIS] AT SER-65</scope>
    <scope>IDENTIFICATION BY MASS SPECTROMETRY [LARGE SCALE ANALYSIS]</scope>
</reference>
<reference key="14">
    <citation type="journal article" date="2009" name="Nature">
        <title>WSTF regulates the H2A.X DNA damage response via a novel tyrosine kinase activity.</title>
        <authorList>
            <person name="Xiao A."/>
            <person name="Li H."/>
            <person name="Shechter D."/>
            <person name="Ahn S.H."/>
            <person name="Fabrizio L.A."/>
            <person name="Erdjument-Bromage H."/>
            <person name="Ishibe-Murakami S."/>
            <person name="Wang B."/>
            <person name="Tempst P."/>
            <person name="Hofmann K."/>
            <person name="Patel D.J."/>
            <person name="Elledge S.J."/>
            <person name="Allis C.D."/>
        </authorList>
    </citation>
    <scope>FUNCTION</scope>
    <scope>INTERACTION WITH BAZ1B</scope>
</reference>
<reference key="15">
    <citation type="journal article" date="2010" name="Cell">
        <title>A tissue-specific atlas of mouse protein phosphorylation and expression.</title>
        <authorList>
            <person name="Huttlin E.L."/>
            <person name="Jedrychowski M.P."/>
            <person name="Elias J.E."/>
            <person name="Goswami T."/>
            <person name="Rad R."/>
            <person name="Beausoleil S.A."/>
            <person name="Villen J."/>
            <person name="Haas W."/>
            <person name="Sowa M.E."/>
            <person name="Gygi S.P."/>
        </authorList>
    </citation>
    <scope>PHOSPHORYLATION [LARGE SCALE ANALYSIS] AT THR-55; SER-65 AND THR-112</scope>
    <scope>IDENTIFICATION BY MASS SPECTROMETRY [LARGE SCALE ANALYSIS]</scope>
    <source>
        <tissue>Brain</tissue>
        <tissue>Heart</tissue>
        <tissue>Kidney</tissue>
        <tissue>Lung</tissue>
        <tissue>Spleen</tissue>
        <tissue>Testis</tissue>
    </source>
</reference>
<reference key="16">
    <citation type="journal article" date="2013" name="Mol. Cell">
        <title>SIRT5-mediated lysine desuccinylation impacts diverse metabolic pathways.</title>
        <authorList>
            <person name="Park J."/>
            <person name="Chen Y."/>
            <person name="Tishkoff D.X."/>
            <person name="Peng C."/>
            <person name="Tan M."/>
            <person name="Dai L."/>
            <person name="Xie Z."/>
            <person name="Zhang Y."/>
            <person name="Zwaans B.M."/>
            <person name="Skinner M.E."/>
            <person name="Lombard D.B."/>
            <person name="Zhao Y."/>
        </authorList>
    </citation>
    <scope>ACETYLATION [LARGE SCALE ANALYSIS] AT LYS-439</scope>
    <scope>IDENTIFICATION BY MASS SPECTROMETRY [LARGE SCALE ANALYSIS]</scope>
    <source>
        <tissue>Embryonic fibroblast</tissue>
    </source>
</reference>
<reference key="17">
    <citation type="journal article" date="2021" name="Biochem. Cell Biol.">
        <title>Chromatin remodeling factor CECR2 forms tissue-specific complexes with CCAR2 and LUZP1.</title>
        <authorList>
            <person name="Niri F."/>
            <person name="Terpstra A.N."/>
            <person name="Lim K.R.Q."/>
            <person name="McDermid H.E."/>
        </authorList>
    </citation>
    <scope>IDENTIFICATION IN THE CERF-5 COMPLEX</scope>
</reference>
<accession>Q91ZW3</accession>
<accession>Q8C791</accession>
<accession>Q8CA22</accession>
<accession>Q8VDG1</accession>
<accession>Q925M9</accession>
<feature type="initiator methionine" description="Removed" evidence="1">
    <location>
        <position position="1"/>
    </location>
</feature>
<feature type="chain" id="PRO_0000074355" description="SWI/SNF-related matrix-associated actin-dependent regulator of chromatin subfamily A member 5">
    <location>
        <begin position="2"/>
        <end position="1051"/>
    </location>
</feature>
<feature type="domain" description="Helicase ATP-binding" evidence="2">
    <location>
        <begin position="191"/>
        <end position="356"/>
    </location>
</feature>
<feature type="domain" description="Helicase C-terminal" evidence="3">
    <location>
        <begin position="486"/>
        <end position="637"/>
    </location>
</feature>
<feature type="domain" description="SANT 1" evidence="4">
    <location>
        <begin position="839"/>
        <end position="891"/>
    </location>
</feature>
<feature type="domain" description="SANT 2" evidence="4">
    <location>
        <begin position="942"/>
        <end position="1006"/>
    </location>
</feature>
<feature type="region of interest" description="Disordered" evidence="5">
    <location>
        <begin position="1"/>
        <end position="81"/>
    </location>
</feature>
<feature type="region of interest" description="Disordered" evidence="5">
    <location>
        <begin position="1014"/>
        <end position="1051"/>
    </location>
</feature>
<feature type="short sequence motif" description="DEAH box">
    <location>
        <begin position="307"/>
        <end position="310"/>
    </location>
</feature>
<feature type="compositionally biased region" description="Pro residues" evidence="5">
    <location>
        <begin position="1"/>
        <end position="15"/>
    </location>
</feature>
<feature type="compositionally biased region" description="Gly residues" evidence="5">
    <location>
        <begin position="24"/>
        <end position="38"/>
    </location>
</feature>
<feature type="compositionally biased region" description="Low complexity" evidence="5">
    <location>
        <begin position="39"/>
        <end position="53"/>
    </location>
</feature>
<feature type="compositionally biased region" description="Basic and acidic residues" evidence="5">
    <location>
        <begin position="68"/>
        <end position="81"/>
    </location>
</feature>
<feature type="compositionally biased region" description="Basic residues" evidence="5">
    <location>
        <begin position="1022"/>
        <end position="1033"/>
    </location>
</feature>
<feature type="compositionally biased region" description="Basic and acidic residues" evidence="5">
    <location>
        <begin position="1034"/>
        <end position="1043"/>
    </location>
</feature>
<feature type="binding site" evidence="2">
    <location>
        <begin position="204"/>
        <end position="211"/>
    </location>
    <ligand>
        <name>ATP</name>
        <dbReference type="ChEBI" id="CHEBI:30616"/>
    </ligand>
</feature>
<feature type="modified residue" description="N-acetylserine" evidence="1">
    <location>
        <position position="2"/>
    </location>
</feature>
<feature type="modified residue" description="Phosphothreonine" evidence="19">
    <location>
        <position position="55"/>
    </location>
</feature>
<feature type="modified residue" description="Phosphoserine" evidence="18 19">
    <location>
        <position position="65"/>
    </location>
</feature>
<feature type="modified residue" description="Phosphothreonine" evidence="19">
    <location>
        <position position="112"/>
    </location>
</feature>
<feature type="modified residue" description="Phosphoserine" evidence="1">
    <location>
        <position position="115"/>
    </location>
</feature>
<feature type="modified residue" description="Phosphoserine" evidence="1">
    <location>
        <position position="136"/>
    </location>
</feature>
<feature type="modified residue" description="Phosphoserine" evidence="1">
    <location>
        <position position="170"/>
    </location>
</feature>
<feature type="modified residue" description="N6-acetyllysine" evidence="20">
    <location>
        <position position="439"/>
    </location>
</feature>
<feature type="modified residue" description="Phosphoserine" evidence="1">
    <location>
        <position position="754"/>
    </location>
</feature>
<feature type="cross-link" description="Glycyl lysine isopeptide (Lys-Gly) (interchain with G-Cter in SUMO2)" evidence="1">
    <location>
        <position position="82"/>
    </location>
</feature>
<feature type="cross-link" description="Glycyl lysine isopeptide (Lys-Gly) (interchain with G-Cter in SUMO2)" evidence="1">
    <location>
        <position position="643"/>
    </location>
</feature>
<feature type="cross-link" description="Glycyl lysine isopeptide (Lys-Gly) (interchain with G-Cter in SUMO2)" evidence="1">
    <location>
        <position position="646"/>
    </location>
</feature>
<feature type="cross-link" description="Glycyl lysine isopeptide (Lys-Gly) (interchain with G-Cter in SUMO2)" evidence="1">
    <location>
        <position position="693"/>
    </location>
</feature>
<feature type="cross-link" description="Glycyl lysine isopeptide (Lys-Gly) (interchain with G-Cter in SUMO2)" evidence="1">
    <location>
        <position position="721"/>
    </location>
</feature>
<feature type="cross-link" description="Glycyl lysine isopeptide (Lys-Gly) (interchain with G-Cter in SUMO2)" evidence="1">
    <location>
        <position position="734"/>
    </location>
</feature>
<feature type="cross-link" description="Glycyl lysine isopeptide (Lys-Gly) (interchain with G-Cter in SUMO2)" evidence="1">
    <location>
        <position position="965"/>
    </location>
</feature>
<feature type="sequence conflict" description="In Ref. 2; AAK52454." evidence="17" ref="2">
    <original>AP</original>
    <variation>GS</variation>
    <location>
        <begin position="44"/>
        <end position="45"/>
    </location>
</feature>
<feature type="sequence conflict" description="In Ref. 2; AAK52454." evidence="17" ref="2">
    <original>R</original>
    <variation>C</variation>
    <location>
        <position position="143"/>
    </location>
</feature>
<feature type="sequence conflict" description="In Ref. 2; AAK52454." evidence="17" ref="2">
    <original>S</original>
    <variation>R</variation>
    <location>
        <position position="157"/>
    </location>
</feature>
<feature type="sequence conflict" description="In Ref. 2; AAK52454." evidence="17" ref="2">
    <original>K</original>
    <variation>R</variation>
    <location>
        <position position="249"/>
    </location>
</feature>
<feature type="sequence conflict" description="In Ref. 2; AAK52454." evidence="17" ref="2">
    <original>K</original>
    <variation>N</variation>
    <location>
        <position position="318"/>
    </location>
</feature>
<feature type="sequence conflict" description="In Ref. 2; AAK52454." evidence="17" ref="2">
    <original>C</original>
    <variation>S</variation>
    <location>
        <position position="373"/>
    </location>
</feature>
<feature type="sequence conflict" description="In Ref. 2; AAK52454." evidence="17" ref="2">
    <original>G</original>
    <variation>S</variation>
    <location>
        <position position="498"/>
    </location>
</feature>
<comment type="function">
    <text evidence="1 7 8 9 10 11 13">ATPase that possesses intrinsic ATP-dependent nucleosome-remodeling activity (By similarity). Catalytic subunit of ISWI chromatin-remodeling complexes, which form ordered nucleosome arrays on chromatin and facilitate access to DNA during DNA-templated processes such as DNA replication, transcription, and repair; this may require intact histone H4 tails (PubMed:11532953, PubMed:11980720, PubMed:12198165). Within the ISWI chromatin-remodeling complexes, slides edge- and center-positioned histone octamers away from their original location on the DNA template (PubMed:11532953, PubMed:11980720, PubMed:12198165). Catalytic activity and histone octamer sliding propensity is regulated and determined by components of the ISWI chromatin-remodeling complexes (By similarity). The BAZ1A/ACF1-, BAZ1B/WSTF-, BAZ2A/TIP5- and BAZ2B-containing ISWI chromatin-remodeling complexes regulate the spacing of nucleosomes along the chromatin and have the ability to slide mononucleosomes to the center of a DNA template in an ATP-dependent manner (PubMed:11532953, PubMed:11980720, PubMed:12198165). The CECR2- and RSF1-containing ISWI chromatin-remodeling complexes do not have the ability to slide mononucleosomes to the center of a DNA template (By similarity). Binds to core histones together with RSF1, and is required for the assembly of regular nucleosome arrays by the RSF-5 ISWI chromatin-remodeling complex (By similarity). Involved in DNA replication and together with BAZ1A/ACF1 is required for replication of pericentric heterochromatin in S-phase (By similarity). Probably plays a role in repression of RNA polymerase I dependent transcription of the rDNA locus, through the recruitment of the SIN3/HDAC1 corepressor complex to the rDNA promoter (PubMed:12198165). The WICH-5 ISWI chromatin-remodeling complex regulates the transcription of various genes, has a role in RNA polymerase I and RNA polymerase III transcription, mediates the histone H2AX phosphorylation at 'Tyr-142', and is involved in the maintenance of chromatin structures during DNA replication processes (PubMed:19092802). Essential component of the NoRC-5 ISWI chromatin-remodeling complex, a complex that mediates silencing of a fraction of rDNA by recruiting histone-modifying enzymes and DNA methyltransferases, leading to heterochromatin formation and transcriptional silencing (PubMed:11532953, PubMed:12198165, PubMed:12368916). Required for embryonic development and differentiation, and the proliferation of early blastocyst-derived stem cells (PubMed:14617767).</text>
</comment>
<comment type="catalytic activity">
    <reaction evidence="1">
        <text>ATP + H2O = ADP + phosphate + H(+)</text>
        <dbReference type="Rhea" id="RHEA:13065"/>
        <dbReference type="ChEBI" id="CHEBI:15377"/>
        <dbReference type="ChEBI" id="CHEBI:15378"/>
        <dbReference type="ChEBI" id="CHEBI:30616"/>
        <dbReference type="ChEBI" id="CHEBI:43474"/>
        <dbReference type="ChEBI" id="CHEBI:456216"/>
    </reaction>
    <physiologicalReaction direction="left-to-right" evidence="1">
        <dbReference type="Rhea" id="RHEA:13066"/>
    </physiologicalReaction>
</comment>
<comment type="subunit">
    <text evidence="1 7 8 9 12 13 14">Component of the ACF-5 ISWI chromatin-remodeling complex (also called the ACF/WCRF complex) at least composed of SMARCA5/SNF2H and BAZ1A/ACF1, which regulates the spacing of histone octamers on the DNA template to facilitate access to DNA (By similarity). Within the complex interacts with BAZ1A/ACF1; the interaction is direct and is required to slide nucleosomes from end to center positions on a DNA template in an ATP-dependent manner (By similarity). Component of the CHRAC ISWI chromatin-remodeling complex at least composed of SMARCA5/SNF2H, BAZ1A/ACF1, CHRAC1 and POLE3; the complex preferentially binds DNA through the CHRAC1-POLE3 heterodimer and possesses ATP-dependent nucleosome-remodeling activity (By similarity). Within the complex interacts with BAZ1A/ACF1; the interaction is direct and promotes the interaction with the POLE3-CHRAC1 heterodimer (By similarity). Within the complex interacts with the POLE3-CHRAC1 heterodimer; the interaction is direct and enhances nucleosome sliding activity by the SMARCA5/SNF2H and BAZ1A/ACF1 interaction (By similarity). Neither POLE3 nor CHRAC1 enhances nucleosome sliding activity of the ACF-5 ISWI chromatin remodeling complex (By similarity). Component of the WICH-5 ISWI chromatin-remodeling complex (also called the WICH complex) at least composed of SMARCA5/SNF2H and BAZ1B/WSTF, which regulates the spacing of histone octamers on the DNA template to facilitate access to DNA (PubMed:11980720). Within the complex interacts with BAZ1B/WSTF (PubMed:19092802). Component of the NoRC-5 ISWI chromatin-remodeling complex (also called the NoRC chromatin-remodeling complex) at least composed of SMARCA5/SNF2H and BAZ2A/TIP5; the complex suppresses rDNA transcription by a combination of nucleosome remodeling, histone deacetylation, and DNA methylation (PubMed:11532953, PubMed:12198165). Within the complex interacts with BAZ2A/TIP5 (PubMed:12198165). Within the complex interacts with HDAC1 (PubMed:12198165). Component of the BRF-5 ISWI chromatin-remodeling complex at least composed of SMARCA5/SNF2H and BAZ2B (By similarity). Within the complex interacts with BAZ2B (By similarity). Component of the NURF-5 ISWI chromatin-remodeling complex at least composed of SMARCA5/SNF2H and BPTF (By similarity). Within the complex interacts with BPFT (By similarity). Component of the CERF-5 ISWI chromatin-remodeling complex at least composed of SMARCA5/SNF2H and CECR2 (PubMed:34197713). LUZP1 is detected as part of the CERF-5 complex in embryonic stem cells where it is involved in complex stabilization but is not detected in the complex in the testis (PubMed:34197713). Component of the RSF-5 ISWI chromatin-remodeling complex (also called the RSF complex) at least composed of SMARCA5/SNF2H and RSF1 (By similarity). Within the complex interacts with RSF1 (By similarity). Interacts with the cohesin complex component RAD21; the interaction is direct (By similarity). Interacts with the NuRD complex components HDAC2, RBBP4 and CHD4; the interactions are direct (By similarity). Interacts with PCNA (By similarity). Component of the B-WICH complex, at least composed of SMARCA5/SNF2H, BAZ1B/WSTF, SF3B1, DEK, MYO1C, ERCC6, MYBBP1A and DDX21 which positively regulates RNA polymerase III transcription (By similarity). Interacts with MYO1C (PubMed:16514417). Interacts with BEND3 (By similarity). Interacts with SIRT6; promoting recruitment to DNA damage sites (By similarity).</text>
</comment>
<comment type="interaction">
    <interactant intactId="EBI-927547">
        <id>Q91ZW3</id>
    </interactant>
    <interactant intactId="EBI-927576">
        <id>Q9Z277</id>
        <label>Baz1b</label>
    </interactant>
    <organismsDiffer>false</organismsDiffer>
    <experiments>2</experiments>
</comment>
<comment type="interaction">
    <interactant intactId="EBI-927547">
        <id>Q91ZW3</id>
    </interactant>
    <interactant intactId="EBI-3842521">
        <id>P54843</id>
        <label>Maf</label>
    </interactant>
    <organismsDiffer>false</organismsDiffer>
    <experiments>2</experiments>
</comment>
<comment type="subcellular location">
    <subcellularLocation>
        <location evidence="4 7">Nucleus</location>
    </subcellularLocation>
    <subcellularLocation>
        <location evidence="1">Chromosome</location>
    </subcellularLocation>
    <text evidence="1">Localizes to mitotic chromosomes. Co-localizes with RSF1 in the nucleus. Co-localizes with PCNA at replication foci during S phase. Co-localizes with BAZ1B/WSTF at replication foci during late-S phase. Recruited to DNA damage sites following interaction with SIRT6.</text>
</comment>
<comment type="tissue specificity">
    <text>Ubiquitously expressed.</text>
</comment>
<comment type="developmental stage">
    <text evidence="6">Expressed in CD34-positive erythrocyte progenitor cells. Down-regulated upon differentiation.</text>
</comment>
<comment type="similarity">
    <text evidence="17">Belongs to the SNF2/RAD54 helicase family. ISWI subfamily.</text>
</comment>
<comment type="caution">
    <text evidence="1">Like other proteins within the SNF2 family, they do not possess helicase activity but instead remodel chromatin via an ATP-dependent translocation mechanism.</text>
</comment>
<comment type="sequence caution" evidence="17">
    <conflict type="erroneous initiation">
        <sequence resource="EMBL-CDS" id="AAH21922"/>
    </conflict>
    <text>Truncated N-terminus.</text>
</comment>
<gene>
    <name type="primary">Smarca5</name>
    <name evidence="16" type="synonym">Snf2h</name>
</gene>
<protein>
    <recommendedName>
        <fullName>SWI/SNF-related matrix-associated actin-dependent regulator of chromatin subfamily A member 5</fullName>
        <shortName evidence="15">SMARCA5</shortName>
        <ecNumber evidence="1">3.6.4.-</ecNumber>
    </recommendedName>
    <alternativeName>
        <fullName>Sucrose nonfermenting protein 2 homolog</fullName>
        <shortName evidence="16">mSnf2h</shortName>
    </alternativeName>
</protein>